<proteinExistence type="inferred from homology"/>
<keyword id="KW-0963">Cytoplasm</keyword>
<keyword id="KW-1185">Reference proteome</keyword>
<evidence type="ECO:0000250" key="1"/>
<evidence type="ECO:0000255" key="2">
    <source>
        <dbReference type="PROSITE-ProRule" id="PRU01234"/>
    </source>
</evidence>
<evidence type="ECO:0000305" key="3"/>
<reference key="1">
    <citation type="journal article" date="2003" name="Nature">
        <title>The genome sequence of the filamentous fungus Neurospora crassa.</title>
        <authorList>
            <person name="Galagan J.E."/>
            <person name="Calvo S.E."/>
            <person name="Borkovich K.A."/>
            <person name="Selker E.U."/>
            <person name="Read N.D."/>
            <person name="Jaffe D.B."/>
            <person name="FitzHugh W."/>
            <person name="Ma L.-J."/>
            <person name="Smirnov S."/>
            <person name="Purcell S."/>
            <person name="Rehman B."/>
            <person name="Elkins T."/>
            <person name="Engels R."/>
            <person name="Wang S."/>
            <person name="Nielsen C.B."/>
            <person name="Butler J."/>
            <person name="Endrizzi M."/>
            <person name="Qui D."/>
            <person name="Ianakiev P."/>
            <person name="Bell-Pedersen D."/>
            <person name="Nelson M.A."/>
            <person name="Werner-Washburne M."/>
            <person name="Selitrennikoff C.P."/>
            <person name="Kinsey J.A."/>
            <person name="Braun E.L."/>
            <person name="Zelter A."/>
            <person name="Schulte U."/>
            <person name="Kothe G.O."/>
            <person name="Jedd G."/>
            <person name="Mewes H.-W."/>
            <person name="Staben C."/>
            <person name="Marcotte E."/>
            <person name="Greenberg D."/>
            <person name="Roy A."/>
            <person name="Foley K."/>
            <person name="Naylor J."/>
            <person name="Stange-Thomann N."/>
            <person name="Barrett R."/>
            <person name="Gnerre S."/>
            <person name="Kamal M."/>
            <person name="Kamvysselis M."/>
            <person name="Mauceli E.W."/>
            <person name="Bielke C."/>
            <person name="Rudd S."/>
            <person name="Frishman D."/>
            <person name="Krystofova S."/>
            <person name="Rasmussen C."/>
            <person name="Metzenberg R.L."/>
            <person name="Perkins D.D."/>
            <person name="Kroken S."/>
            <person name="Cogoni C."/>
            <person name="Macino G."/>
            <person name="Catcheside D.E.A."/>
            <person name="Li W."/>
            <person name="Pratt R.J."/>
            <person name="Osmani S.A."/>
            <person name="DeSouza C.P.C."/>
            <person name="Glass N.L."/>
            <person name="Orbach M.J."/>
            <person name="Berglund J.A."/>
            <person name="Voelker R."/>
            <person name="Yarden O."/>
            <person name="Plamann M."/>
            <person name="Seiler S."/>
            <person name="Dunlap J.C."/>
            <person name="Radford A."/>
            <person name="Aramayo R."/>
            <person name="Natvig D.O."/>
            <person name="Alex L.A."/>
            <person name="Mannhaupt G."/>
            <person name="Ebbole D.J."/>
            <person name="Freitag M."/>
            <person name="Paulsen I."/>
            <person name="Sachs M.S."/>
            <person name="Lander E.S."/>
            <person name="Nusbaum C."/>
            <person name="Birren B.W."/>
        </authorList>
    </citation>
    <scope>NUCLEOTIDE SEQUENCE [LARGE SCALE GENOMIC DNA]</scope>
    <source>
        <strain>ATCC 24698 / 74-OR23-1A / CBS 708.71 / DSM 1257 / FGSC 987</strain>
    </source>
</reference>
<comment type="function">
    <text evidence="1">May be involved in a process influencing telomere capping.</text>
</comment>
<comment type="subcellular location">
    <subcellularLocation>
        <location evidence="1">Cytoplasm</location>
    </subcellularLocation>
</comment>
<comment type="similarity">
    <text evidence="3">Belongs to the RTC5 family.</text>
</comment>
<dbReference type="EMBL" id="CM002242">
    <property type="protein sequence ID" value="EAA30271.2"/>
    <property type="molecule type" value="Genomic_DNA"/>
</dbReference>
<dbReference type="RefSeq" id="XP_959507.2">
    <property type="nucleotide sequence ID" value="XM_954414.3"/>
</dbReference>
<dbReference type="SMR" id="Q7S454"/>
<dbReference type="FunCoup" id="Q7S454">
    <property type="interactions" value="4"/>
</dbReference>
<dbReference type="STRING" id="367110.Q7S454"/>
<dbReference type="PaxDb" id="5141-EFNCRP00000008502"/>
<dbReference type="EnsemblFungi" id="EAA30271">
    <property type="protein sequence ID" value="EAA30271"/>
    <property type="gene ID" value="NCU02452"/>
</dbReference>
<dbReference type="GeneID" id="23568387"/>
<dbReference type="KEGG" id="ncr:NCU02452"/>
<dbReference type="VEuPathDB" id="FungiDB:NCU02452"/>
<dbReference type="HOGENOM" id="CLU_011918_1_0_1"/>
<dbReference type="InParanoid" id="Q7S454"/>
<dbReference type="OrthoDB" id="289228at2759"/>
<dbReference type="Proteomes" id="UP000001805">
    <property type="component" value="Chromosome 7, Linkage Group VII"/>
</dbReference>
<dbReference type="GO" id="GO:0005737">
    <property type="term" value="C:cytoplasm"/>
    <property type="evidence" value="ECO:0007669"/>
    <property type="project" value="UniProtKB-SubCell"/>
</dbReference>
<dbReference type="GO" id="GO:0005634">
    <property type="term" value="C:nucleus"/>
    <property type="evidence" value="ECO:0000318"/>
    <property type="project" value="GO_Central"/>
</dbReference>
<dbReference type="GO" id="GO:0006979">
    <property type="term" value="P:response to oxidative stress"/>
    <property type="evidence" value="ECO:0000318"/>
    <property type="project" value="GO_Central"/>
</dbReference>
<dbReference type="InterPro" id="IPR006571">
    <property type="entry name" value="TLDc_dom"/>
</dbReference>
<dbReference type="PANTHER" id="PTHR23354">
    <property type="entry name" value="NUCLEOLAR PROTEIN 7/ESTROGEN RECEPTOR COACTIVATOR-RELATED"/>
    <property type="match status" value="1"/>
</dbReference>
<dbReference type="PANTHER" id="PTHR23354:SF130">
    <property type="entry name" value="RESTRICTION OF TELOMERE CAPPING PROTEIN 5"/>
    <property type="match status" value="1"/>
</dbReference>
<dbReference type="Pfam" id="PF07534">
    <property type="entry name" value="TLD"/>
    <property type="match status" value="1"/>
</dbReference>
<dbReference type="SMART" id="SM00584">
    <property type="entry name" value="TLDc"/>
    <property type="match status" value="1"/>
</dbReference>
<dbReference type="PROSITE" id="PS51886">
    <property type="entry name" value="TLDC"/>
    <property type="match status" value="1"/>
</dbReference>
<gene>
    <name type="primary">rtc5</name>
    <name type="ORF">NCU02452</name>
</gene>
<feature type="chain" id="PRO_0000408833" description="Restriction of telomere capping protein 5">
    <location>
        <begin position="1"/>
        <end position="599"/>
    </location>
</feature>
<feature type="domain" description="TLDc" evidence="2">
    <location>
        <begin position="318"/>
        <end position="544"/>
    </location>
</feature>
<protein>
    <recommendedName>
        <fullName>Restriction of telomere capping protein 5</fullName>
    </recommendedName>
</protein>
<accession>Q7S454</accession>
<sequence length="599" mass="66841">MGQVLSEERKPAPLSHEELVKELANIFADKCFTPLELYSLKQVFKSLAHHEQHVGYLKEGTIATYLNVPDILGVSPVLFQMVTYIAAFPFLEDAPAFLGLQQMVIVITLMTDRYRRVLRKDAADKTKLLFKSLAVYDRKLSRPAADMHSGLTNAREQAGNDRQALDNDELVLAAFDALGHVIPDKQQNMLATHEAMIPGDKFRKFIMLLLLVAPLDPQGRLDSDPNRVTGTGLQCLRTAAESILAAFLDVERKPGVEYLRFSKVIASCLPFLFRGLTPLFEYFLFSEELDFHKGKKGTSRSPTMFPEPEQPILQDTGSIMNASILSQMSFFLPGNLLFRRLRLLYAGDEDGFSMGSFEAKVFKWKAPTILLVCGTRLRDDSDHHSNGSAPAFWASLPPRRFPRGSSGEAERLTFGVYVPEPWKLTHRDCFGGEDTILFQLEPIHDLFRASSLNKDHISFARPSASPSHAGVSFGCPPPRPSQAYRRSSIIALGPVSLMLDSSFEFGCFTHDYASKGGAFHTSMIREYDFQERFEIGSVEVWGCGGDEEAKDQAERWAWEAREAEARRRINLGTGDIEADRALLEMAGLIGSNRNGGSMA</sequence>
<organism>
    <name type="scientific">Neurospora crassa (strain ATCC 24698 / 74-OR23-1A / CBS 708.71 / DSM 1257 / FGSC 987)</name>
    <dbReference type="NCBI Taxonomy" id="367110"/>
    <lineage>
        <taxon>Eukaryota</taxon>
        <taxon>Fungi</taxon>
        <taxon>Dikarya</taxon>
        <taxon>Ascomycota</taxon>
        <taxon>Pezizomycotina</taxon>
        <taxon>Sordariomycetes</taxon>
        <taxon>Sordariomycetidae</taxon>
        <taxon>Sordariales</taxon>
        <taxon>Sordariaceae</taxon>
        <taxon>Neurospora</taxon>
    </lineage>
</organism>
<name>RTC5_NEUCR</name>